<reference key="1">
    <citation type="journal article" date="1999" name="Blood">
        <title>Characterization of the murine platelet alphaIIb gene and encoded cDNA.</title>
        <authorList>
            <person name="Thornton M.A."/>
            <person name="Poncz M."/>
        </authorList>
    </citation>
    <scope>NUCLEOTIDE SEQUENCE [GENOMIC DNA / MRNA]</scope>
</reference>
<reference key="2">
    <citation type="journal article" date="2005" name="Science">
        <title>The transcriptional landscape of the mammalian genome.</title>
        <authorList>
            <person name="Carninci P."/>
            <person name="Kasukawa T."/>
            <person name="Katayama S."/>
            <person name="Gough J."/>
            <person name="Frith M.C."/>
            <person name="Maeda N."/>
            <person name="Oyama R."/>
            <person name="Ravasi T."/>
            <person name="Lenhard B."/>
            <person name="Wells C."/>
            <person name="Kodzius R."/>
            <person name="Shimokawa K."/>
            <person name="Bajic V.B."/>
            <person name="Brenner S.E."/>
            <person name="Batalov S."/>
            <person name="Forrest A.R."/>
            <person name="Zavolan M."/>
            <person name="Davis M.J."/>
            <person name="Wilming L.G."/>
            <person name="Aidinis V."/>
            <person name="Allen J.E."/>
            <person name="Ambesi-Impiombato A."/>
            <person name="Apweiler R."/>
            <person name="Aturaliya R.N."/>
            <person name="Bailey T.L."/>
            <person name="Bansal M."/>
            <person name="Baxter L."/>
            <person name="Beisel K.W."/>
            <person name="Bersano T."/>
            <person name="Bono H."/>
            <person name="Chalk A.M."/>
            <person name="Chiu K.P."/>
            <person name="Choudhary V."/>
            <person name="Christoffels A."/>
            <person name="Clutterbuck D.R."/>
            <person name="Crowe M.L."/>
            <person name="Dalla E."/>
            <person name="Dalrymple B.P."/>
            <person name="de Bono B."/>
            <person name="Della Gatta G."/>
            <person name="di Bernardo D."/>
            <person name="Down T."/>
            <person name="Engstrom P."/>
            <person name="Fagiolini M."/>
            <person name="Faulkner G."/>
            <person name="Fletcher C.F."/>
            <person name="Fukushima T."/>
            <person name="Furuno M."/>
            <person name="Futaki S."/>
            <person name="Gariboldi M."/>
            <person name="Georgii-Hemming P."/>
            <person name="Gingeras T.R."/>
            <person name="Gojobori T."/>
            <person name="Green R.E."/>
            <person name="Gustincich S."/>
            <person name="Harbers M."/>
            <person name="Hayashi Y."/>
            <person name="Hensch T.K."/>
            <person name="Hirokawa N."/>
            <person name="Hill D."/>
            <person name="Huminiecki L."/>
            <person name="Iacono M."/>
            <person name="Ikeo K."/>
            <person name="Iwama A."/>
            <person name="Ishikawa T."/>
            <person name="Jakt M."/>
            <person name="Kanapin A."/>
            <person name="Katoh M."/>
            <person name="Kawasawa Y."/>
            <person name="Kelso J."/>
            <person name="Kitamura H."/>
            <person name="Kitano H."/>
            <person name="Kollias G."/>
            <person name="Krishnan S.P."/>
            <person name="Kruger A."/>
            <person name="Kummerfeld S.K."/>
            <person name="Kurochkin I.V."/>
            <person name="Lareau L.F."/>
            <person name="Lazarevic D."/>
            <person name="Lipovich L."/>
            <person name="Liu J."/>
            <person name="Liuni S."/>
            <person name="McWilliam S."/>
            <person name="Madan Babu M."/>
            <person name="Madera M."/>
            <person name="Marchionni L."/>
            <person name="Matsuda H."/>
            <person name="Matsuzawa S."/>
            <person name="Miki H."/>
            <person name="Mignone F."/>
            <person name="Miyake S."/>
            <person name="Morris K."/>
            <person name="Mottagui-Tabar S."/>
            <person name="Mulder N."/>
            <person name="Nakano N."/>
            <person name="Nakauchi H."/>
            <person name="Ng P."/>
            <person name="Nilsson R."/>
            <person name="Nishiguchi S."/>
            <person name="Nishikawa S."/>
            <person name="Nori F."/>
            <person name="Ohara O."/>
            <person name="Okazaki Y."/>
            <person name="Orlando V."/>
            <person name="Pang K.C."/>
            <person name="Pavan W.J."/>
            <person name="Pavesi G."/>
            <person name="Pesole G."/>
            <person name="Petrovsky N."/>
            <person name="Piazza S."/>
            <person name="Reed J."/>
            <person name="Reid J.F."/>
            <person name="Ring B.Z."/>
            <person name="Ringwald M."/>
            <person name="Rost B."/>
            <person name="Ruan Y."/>
            <person name="Salzberg S.L."/>
            <person name="Sandelin A."/>
            <person name="Schneider C."/>
            <person name="Schoenbach C."/>
            <person name="Sekiguchi K."/>
            <person name="Semple C.A."/>
            <person name="Seno S."/>
            <person name="Sessa L."/>
            <person name="Sheng Y."/>
            <person name="Shibata Y."/>
            <person name="Shimada H."/>
            <person name="Shimada K."/>
            <person name="Silva D."/>
            <person name="Sinclair B."/>
            <person name="Sperling S."/>
            <person name="Stupka E."/>
            <person name="Sugiura K."/>
            <person name="Sultana R."/>
            <person name="Takenaka Y."/>
            <person name="Taki K."/>
            <person name="Tammoja K."/>
            <person name="Tan S.L."/>
            <person name="Tang S."/>
            <person name="Taylor M.S."/>
            <person name="Tegner J."/>
            <person name="Teichmann S.A."/>
            <person name="Ueda H.R."/>
            <person name="van Nimwegen E."/>
            <person name="Verardo R."/>
            <person name="Wei C.L."/>
            <person name="Yagi K."/>
            <person name="Yamanishi H."/>
            <person name="Zabarovsky E."/>
            <person name="Zhu S."/>
            <person name="Zimmer A."/>
            <person name="Hide W."/>
            <person name="Bult C."/>
            <person name="Grimmond S.M."/>
            <person name="Teasdale R.D."/>
            <person name="Liu E.T."/>
            <person name="Brusic V."/>
            <person name="Quackenbush J."/>
            <person name="Wahlestedt C."/>
            <person name="Mattick J.S."/>
            <person name="Hume D.A."/>
            <person name="Kai C."/>
            <person name="Sasaki D."/>
            <person name="Tomaru Y."/>
            <person name="Fukuda S."/>
            <person name="Kanamori-Katayama M."/>
            <person name="Suzuki M."/>
            <person name="Aoki J."/>
            <person name="Arakawa T."/>
            <person name="Iida J."/>
            <person name="Imamura K."/>
            <person name="Itoh M."/>
            <person name="Kato T."/>
            <person name="Kawaji H."/>
            <person name="Kawagashira N."/>
            <person name="Kawashima T."/>
            <person name="Kojima M."/>
            <person name="Kondo S."/>
            <person name="Konno H."/>
            <person name="Nakano K."/>
            <person name="Ninomiya N."/>
            <person name="Nishio T."/>
            <person name="Okada M."/>
            <person name="Plessy C."/>
            <person name="Shibata K."/>
            <person name="Shiraki T."/>
            <person name="Suzuki S."/>
            <person name="Tagami M."/>
            <person name="Waki K."/>
            <person name="Watahiki A."/>
            <person name="Okamura-Oho Y."/>
            <person name="Suzuki H."/>
            <person name="Kawai J."/>
            <person name="Hayashizaki Y."/>
        </authorList>
    </citation>
    <scope>NUCLEOTIDE SEQUENCE [LARGE SCALE MRNA]</scope>
    <source>
        <strain>C57BL/6J</strain>
        <strain>NOD</strain>
        <tissue>Heart</tissue>
    </source>
</reference>
<reference key="3">
    <citation type="journal article" date="2009" name="PLoS Biol.">
        <title>Lineage-specific biology revealed by a finished genome assembly of the mouse.</title>
        <authorList>
            <person name="Church D.M."/>
            <person name="Goodstadt L."/>
            <person name="Hillier L.W."/>
            <person name="Zody M.C."/>
            <person name="Goldstein S."/>
            <person name="She X."/>
            <person name="Bult C.J."/>
            <person name="Agarwala R."/>
            <person name="Cherry J.L."/>
            <person name="DiCuccio M."/>
            <person name="Hlavina W."/>
            <person name="Kapustin Y."/>
            <person name="Meric P."/>
            <person name="Maglott D."/>
            <person name="Birtle Z."/>
            <person name="Marques A.C."/>
            <person name="Graves T."/>
            <person name="Zhou S."/>
            <person name="Teague B."/>
            <person name="Potamousis K."/>
            <person name="Churas C."/>
            <person name="Place M."/>
            <person name="Herschleb J."/>
            <person name="Runnheim R."/>
            <person name="Forrest D."/>
            <person name="Amos-Landgraf J."/>
            <person name="Schwartz D.C."/>
            <person name="Cheng Z."/>
            <person name="Lindblad-Toh K."/>
            <person name="Eichler E.E."/>
            <person name="Ponting C.P."/>
        </authorList>
    </citation>
    <scope>NUCLEOTIDE SEQUENCE [LARGE SCALE GENOMIC DNA]</scope>
    <source>
        <strain>C57BL/6J</strain>
    </source>
</reference>
<reference key="4">
    <citation type="journal article" date="2004" name="Genome Res.">
        <title>The status, quality, and expansion of the NIH full-length cDNA project: the Mammalian Gene Collection (MGC).</title>
        <authorList>
            <consortium name="The MGC Project Team"/>
        </authorList>
    </citation>
    <scope>NUCLEOTIDE SEQUENCE [LARGE SCALE MRNA]</scope>
    <source>
        <tissue>Brain</tissue>
    </source>
</reference>
<reference key="5">
    <citation type="journal article" date="1992" name="J. Biol. Chem.">
        <title>Identification of the alpha IIb beta 3 integrin in murine tumor cells.</title>
        <authorList>
            <person name="Chen Y.Q."/>
            <person name="Gao X."/>
            <person name="Timar J."/>
            <person name="Tang D."/>
            <person name="Grossi I.M."/>
            <person name="Chelladurai M."/>
            <person name="Kunicki T.J."/>
            <person name="Fligiel S.E."/>
            <person name="Taylor J.D."/>
            <person name="Honn K.V."/>
        </authorList>
    </citation>
    <scope>NUCLEOTIDE SEQUENCE [MRNA] OF 805-865</scope>
</reference>
<reference key="6">
    <citation type="submission" date="1998-01" db="EMBL/GenBank/DDBJ databases">
        <authorList>
            <person name="Rout U.K."/>
            <person name="Armant D.R."/>
        </authorList>
    </citation>
    <scope>NUCLEOTIDE SEQUENCE OF 790-1022</scope>
</reference>
<reference key="7">
    <citation type="journal article" date="2000" name="J. Biol. Chem.">
        <title>Multiple discontinuous ligand-mimetic antibody binding sites define a ligand binding pocket in integrin alphaIIbbeta3.</title>
        <authorList>
            <person name="Puzon-McLaughlin W."/>
            <person name="Kamata T."/>
            <person name="Takada Y."/>
        </authorList>
    </citation>
    <scope>NUCLEOTIDE SEQUENCE [MRNA] OF 1-484</scope>
</reference>
<reference key="8">
    <citation type="journal article" date="2010" name="Cell">
        <title>A tissue-specific atlas of mouse protein phosphorylation and expression.</title>
        <authorList>
            <person name="Huttlin E.L."/>
            <person name="Jedrychowski M.P."/>
            <person name="Elias J.E."/>
            <person name="Goswami T."/>
            <person name="Rad R."/>
            <person name="Beausoleil S.A."/>
            <person name="Villen J."/>
            <person name="Haas W."/>
            <person name="Sowa M.E."/>
            <person name="Gygi S.P."/>
        </authorList>
    </citation>
    <scope>IDENTIFICATION BY MASS SPECTROMETRY [LARGE SCALE ANALYSIS]</scope>
    <source>
        <tissue>Brown adipose tissue</tissue>
        <tissue>Heart</tissue>
        <tissue>Liver</tissue>
        <tissue>Lung</tissue>
        <tissue>Spleen</tissue>
    </source>
</reference>
<reference key="9">
    <citation type="journal article" date="2014" name="Thromb. Haemost.">
        <title>Cyclophilin A is an important mediator of platelet function by regulating integrin alphaIIbbeta3 bidirectional signalling.</title>
        <authorList>
            <person name="Wang L."/>
            <person name="Soe N.N."/>
            <person name="Sowden M."/>
            <person name="Xu Y."/>
            <person name="Modjeski K."/>
            <person name="Baskaran P."/>
            <person name="Kim Y."/>
            <person name="Smolock E.M."/>
            <person name="Morrell C.N."/>
            <person name="Berk B.C."/>
        </authorList>
    </citation>
    <scope>INTERACTION WITH PPIA</scope>
</reference>
<comment type="function">
    <text>Integrin alpha-IIb/beta-3 is a receptor for fibronectin, fibrinogen, plasminogen, prothrombin, thrombospondin and vitronectin. It recognizes the sequence R-G-D in a wide array of ligands. It recognizes the sequence H-H-L-G-G-G-A-K-Q-A-G-D-V in fibrinogen gamma chain. Following activation integrin alpha-IIb/beta-3 brings about platelet/platelet interaction through binding of soluble fibrinogen. This step leads to rapid platelet aggregation which physically plugs ruptured endothelial cell surface.</text>
</comment>
<comment type="subunit">
    <text evidence="2 5">Heterodimer of an alpha and a beta subunit. The alpha subunit is composed of a heavy and a light chain linked by a disulfide bond. Alpha-IIb associates with beta-3. Directly interacts with RNF181. Interacts (via C-terminus cytoplasmic tail region) with CIB1; the interaction is direct and calcium-dependent. Interacts (via C-terminus cytoplasmic tail region) with CIB2, CIB3 and CIB4; the interactions are stabilized/increased in a calcium and magnesium-dependent manner (By similarity). ITGA2B:ITGB3 interacts with PPIA/CYPA; the interaction is ROS and PPIase activity-dependent and is increased in the presence of thrombin (PubMed:24429998). ITGA2B:ITGB3 interacts with SELP (via C-type lectin domain); the interaction mediates cell-cell interaction and adhesion (By similarity).</text>
</comment>
<comment type="subcellular location">
    <subcellularLocation>
        <location>Membrane</location>
        <topology>Single-pass type I membrane protein</topology>
    </subcellularLocation>
</comment>
<comment type="PTM">
    <molecule>Integrin alpha-IIb heavy chain</molecule>
    <text evidence="2">Cleaved by ELANE; the cleavage promotes activation of platelet fibrinogen receptor integrin alpha-IIb/beta-3.</text>
</comment>
<comment type="similarity">
    <text evidence="6">Belongs to the integrin alpha chain family.</text>
</comment>
<name>ITA2B_MOUSE</name>
<dbReference type="EMBL" id="AF169829">
    <property type="protein sequence ID" value="AAF06996.1"/>
    <property type="molecule type" value="Genomic_DNA"/>
</dbReference>
<dbReference type="EMBL" id="AF170316">
    <property type="protein sequence ID" value="AAD56216.1"/>
    <property type="molecule type" value="mRNA"/>
</dbReference>
<dbReference type="EMBL" id="AK142289">
    <property type="protein sequence ID" value="BAE25013.1"/>
    <property type="molecule type" value="mRNA"/>
</dbReference>
<dbReference type="EMBL" id="AK154619">
    <property type="protein sequence ID" value="BAE32718.1"/>
    <property type="molecule type" value="mRNA"/>
</dbReference>
<dbReference type="EMBL" id="AL596258">
    <property type="status" value="NOT_ANNOTATED_CDS"/>
    <property type="molecule type" value="Genomic_DNA"/>
</dbReference>
<dbReference type="EMBL" id="BC120493">
    <property type="protein sequence ID" value="AAI20494.1"/>
    <property type="molecule type" value="mRNA"/>
</dbReference>
<dbReference type="EMBL" id="S43388">
    <property type="protein sequence ID" value="AAB23054.2"/>
    <property type="molecule type" value="mRNA"/>
</dbReference>
<dbReference type="EMBL" id="AF045019">
    <property type="protein sequence ID" value="AAD02339.1"/>
    <property type="molecule type" value="mRNA"/>
</dbReference>
<dbReference type="EMBL" id="AF166384">
    <property type="protein sequence ID" value="AAF43997.1"/>
    <property type="molecule type" value="mRNA"/>
</dbReference>
<dbReference type="CCDS" id="CCDS25500.1"/>
<dbReference type="PIR" id="A43430">
    <property type="entry name" value="A43430"/>
</dbReference>
<dbReference type="RefSeq" id="NP_034705.2">
    <property type="nucleotide sequence ID" value="NM_010575.3"/>
</dbReference>
<dbReference type="SMR" id="Q9QUM0"/>
<dbReference type="BioGRID" id="200815">
    <property type="interactions" value="147"/>
</dbReference>
<dbReference type="ComplexPortal" id="CPX-3116">
    <property type="entry name" value="Integrin alphaIIb-beta3 complex"/>
</dbReference>
<dbReference type="CORUM" id="Q9QUM0"/>
<dbReference type="FunCoup" id="Q9QUM0">
    <property type="interactions" value="648"/>
</dbReference>
<dbReference type="IntAct" id="Q9QUM0">
    <property type="interactions" value="1"/>
</dbReference>
<dbReference type="MINT" id="Q9QUM0"/>
<dbReference type="STRING" id="10090.ENSMUSP00000099375"/>
<dbReference type="BindingDB" id="Q9QUM0"/>
<dbReference type="ChEMBL" id="CHEMBL3430894"/>
<dbReference type="GlyCosmos" id="Q9QUM0">
    <property type="glycosylation" value="5 sites, No reported glycans"/>
</dbReference>
<dbReference type="GlyGen" id="Q9QUM0">
    <property type="glycosylation" value="5 sites, 1 N-linked glycan (1 site)"/>
</dbReference>
<dbReference type="iPTMnet" id="Q9QUM0"/>
<dbReference type="PhosphoSitePlus" id="Q9QUM0"/>
<dbReference type="SwissPalm" id="Q9QUM0"/>
<dbReference type="jPOST" id="Q9QUM0"/>
<dbReference type="PaxDb" id="10090-ENSMUSP00000099375"/>
<dbReference type="ProteomicsDB" id="269343"/>
<dbReference type="Antibodypedia" id="4350">
    <property type="antibodies" value="1999 antibodies from 52 providers"/>
</dbReference>
<dbReference type="DNASU" id="16399"/>
<dbReference type="Ensembl" id="ENSMUST00000103086.4">
    <property type="protein sequence ID" value="ENSMUSP00000099375.4"/>
    <property type="gene ID" value="ENSMUSG00000034664.14"/>
</dbReference>
<dbReference type="GeneID" id="16399"/>
<dbReference type="KEGG" id="mmu:16399"/>
<dbReference type="UCSC" id="uc007lrx.2">
    <property type="organism name" value="mouse"/>
</dbReference>
<dbReference type="AGR" id="MGI:96601"/>
<dbReference type="CTD" id="3674"/>
<dbReference type="MGI" id="MGI:96601">
    <property type="gene designation" value="Itga2b"/>
</dbReference>
<dbReference type="VEuPathDB" id="HostDB:ENSMUSG00000034664"/>
<dbReference type="eggNOG" id="KOG3637">
    <property type="taxonomic scope" value="Eukaryota"/>
</dbReference>
<dbReference type="GeneTree" id="ENSGT00940000160724"/>
<dbReference type="HOGENOM" id="CLU_004111_4_1_1"/>
<dbReference type="InParanoid" id="Q9QUM0"/>
<dbReference type="OMA" id="LQMDTAN"/>
<dbReference type="OrthoDB" id="5317514at2759"/>
<dbReference type="PhylomeDB" id="Q9QUM0"/>
<dbReference type="TreeFam" id="TF105391"/>
<dbReference type="Reactome" id="R-MMU-114608">
    <property type="pathway name" value="Platelet degranulation"/>
</dbReference>
<dbReference type="Reactome" id="R-MMU-216083">
    <property type="pathway name" value="Integrin cell surface interactions"/>
</dbReference>
<dbReference type="Reactome" id="R-MMU-3000178">
    <property type="pathway name" value="ECM proteoglycans"/>
</dbReference>
<dbReference type="Reactome" id="R-MMU-354192">
    <property type="pathway name" value="Integrin signaling"/>
</dbReference>
<dbReference type="Reactome" id="R-MMU-354194">
    <property type="pathway name" value="GRB2:SOS provides linkage to MAPK signaling for Integrins"/>
</dbReference>
<dbReference type="Reactome" id="R-MMU-372708">
    <property type="pathway name" value="p130Cas linkage to MAPK signaling for integrins"/>
</dbReference>
<dbReference type="Reactome" id="R-MMU-445144">
    <property type="pathway name" value="Signal transduction by L1"/>
</dbReference>
<dbReference type="Reactome" id="R-MMU-5674135">
    <property type="pathway name" value="MAP2K and MAPK activation"/>
</dbReference>
<dbReference type="BioGRID-ORCS" id="16399">
    <property type="hits" value="5 hits in 78 CRISPR screens"/>
</dbReference>
<dbReference type="ChiTaRS" id="Itga2b">
    <property type="organism name" value="mouse"/>
</dbReference>
<dbReference type="PRO" id="PR:Q9QUM0"/>
<dbReference type="Proteomes" id="UP000000589">
    <property type="component" value="Chromosome 11"/>
</dbReference>
<dbReference type="RNAct" id="Q9QUM0">
    <property type="molecule type" value="protein"/>
</dbReference>
<dbReference type="Bgee" id="ENSMUSG00000034664">
    <property type="expression patterns" value="Expressed in blood and 109 other cell types or tissues"/>
</dbReference>
<dbReference type="GO" id="GO:0009986">
    <property type="term" value="C:cell surface"/>
    <property type="evidence" value="ECO:0000314"/>
    <property type="project" value="MGI"/>
</dbReference>
<dbReference type="GO" id="GO:0009897">
    <property type="term" value="C:external side of plasma membrane"/>
    <property type="evidence" value="ECO:0000314"/>
    <property type="project" value="MGI"/>
</dbReference>
<dbReference type="GO" id="GO:0070062">
    <property type="term" value="C:extracellular exosome"/>
    <property type="evidence" value="ECO:0007669"/>
    <property type="project" value="Ensembl"/>
</dbReference>
<dbReference type="GO" id="GO:0005925">
    <property type="term" value="C:focal adhesion"/>
    <property type="evidence" value="ECO:0000314"/>
    <property type="project" value="MGI"/>
</dbReference>
<dbReference type="GO" id="GO:0070442">
    <property type="term" value="C:integrin alphaIIb-beta3 complex"/>
    <property type="evidence" value="ECO:0000266"/>
    <property type="project" value="ComplexPortal"/>
</dbReference>
<dbReference type="GO" id="GO:0050840">
    <property type="term" value="F:extracellular matrix binding"/>
    <property type="evidence" value="ECO:0000315"/>
    <property type="project" value="MGI"/>
</dbReference>
<dbReference type="GO" id="GO:0070051">
    <property type="term" value="F:fibrinogen binding"/>
    <property type="evidence" value="ECO:0007669"/>
    <property type="project" value="Ensembl"/>
</dbReference>
<dbReference type="GO" id="GO:0042802">
    <property type="term" value="F:identical protein binding"/>
    <property type="evidence" value="ECO:0007669"/>
    <property type="project" value="Ensembl"/>
</dbReference>
<dbReference type="GO" id="GO:0046872">
    <property type="term" value="F:metal ion binding"/>
    <property type="evidence" value="ECO:0007669"/>
    <property type="project" value="UniProtKB-KW"/>
</dbReference>
<dbReference type="GO" id="GO:0007160">
    <property type="term" value="P:cell-matrix adhesion"/>
    <property type="evidence" value="ECO:0000315"/>
    <property type="project" value="MGI"/>
</dbReference>
<dbReference type="GO" id="GO:0007229">
    <property type="term" value="P:integrin-mediated signaling pathway"/>
    <property type="evidence" value="ECO:0000303"/>
    <property type="project" value="ComplexPortal"/>
</dbReference>
<dbReference type="GO" id="GO:0002687">
    <property type="term" value="P:positive regulation of leukocyte migration"/>
    <property type="evidence" value="ECO:0007669"/>
    <property type="project" value="Ensembl"/>
</dbReference>
<dbReference type="FunFam" id="2.60.40.1510:FF:000001">
    <property type="entry name" value="Integrin alpha V"/>
    <property type="match status" value="1"/>
</dbReference>
<dbReference type="FunFam" id="2.130.10.130:FF:000012">
    <property type="entry name" value="Integrin alpha-IIb"/>
    <property type="match status" value="1"/>
</dbReference>
<dbReference type="FunFam" id="1.20.5.930:FF:000001">
    <property type="entry name" value="Integrin subunit alpha V"/>
    <property type="match status" value="1"/>
</dbReference>
<dbReference type="FunFam" id="2.60.40.1460:FF:000001">
    <property type="entry name" value="Integrin, alpha V"/>
    <property type="match status" value="1"/>
</dbReference>
<dbReference type="Gene3D" id="1.20.5.930">
    <property type="entry name" value="Bicelle-embedded integrin alpha(iib) transmembrane segment"/>
    <property type="match status" value="1"/>
</dbReference>
<dbReference type="Gene3D" id="2.130.10.130">
    <property type="entry name" value="Integrin alpha, N-terminal"/>
    <property type="match status" value="1"/>
</dbReference>
<dbReference type="Gene3D" id="2.60.40.1460">
    <property type="entry name" value="Integrin domains. Chain A, domain 2"/>
    <property type="match status" value="1"/>
</dbReference>
<dbReference type="Gene3D" id="2.60.40.1510">
    <property type="entry name" value="ntegrin, alpha v. Chain A, domain 3"/>
    <property type="match status" value="1"/>
</dbReference>
<dbReference type="Gene3D" id="2.60.40.1530">
    <property type="entry name" value="ntegrin, alpha v. Chain A, domain 4"/>
    <property type="match status" value="1"/>
</dbReference>
<dbReference type="InterPro" id="IPR013517">
    <property type="entry name" value="FG-GAP"/>
</dbReference>
<dbReference type="InterPro" id="IPR013519">
    <property type="entry name" value="Int_alpha_beta-p"/>
</dbReference>
<dbReference type="InterPro" id="IPR000413">
    <property type="entry name" value="Integrin_alpha"/>
</dbReference>
<dbReference type="InterPro" id="IPR018184">
    <property type="entry name" value="Integrin_alpha_C_CS"/>
</dbReference>
<dbReference type="InterPro" id="IPR013649">
    <property type="entry name" value="Integrin_alpha_Ig-like_1"/>
</dbReference>
<dbReference type="InterPro" id="IPR048285">
    <property type="entry name" value="Integrin_alpha_Ig-like_2"/>
</dbReference>
<dbReference type="InterPro" id="IPR048286">
    <property type="entry name" value="Integrin_alpha_Ig-like_3"/>
</dbReference>
<dbReference type="InterPro" id="IPR028994">
    <property type="entry name" value="Integrin_alpha_N"/>
</dbReference>
<dbReference type="InterPro" id="IPR032695">
    <property type="entry name" value="Integrin_dom_sf"/>
</dbReference>
<dbReference type="PANTHER" id="PTHR23220">
    <property type="entry name" value="INTEGRIN ALPHA"/>
    <property type="match status" value="1"/>
</dbReference>
<dbReference type="PANTHER" id="PTHR23220:SF73">
    <property type="entry name" value="INTEGRIN ALPHA-IIB"/>
    <property type="match status" value="1"/>
</dbReference>
<dbReference type="Pfam" id="PF01839">
    <property type="entry name" value="FG-GAP"/>
    <property type="match status" value="2"/>
</dbReference>
<dbReference type="Pfam" id="PF08441">
    <property type="entry name" value="Integrin_A_Ig_1"/>
    <property type="match status" value="1"/>
</dbReference>
<dbReference type="Pfam" id="PF20805">
    <property type="entry name" value="Integrin_A_Ig_2"/>
    <property type="match status" value="1"/>
</dbReference>
<dbReference type="Pfam" id="PF20806">
    <property type="entry name" value="Integrin_A_Ig_3"/>
    <property type="match status" value="1"/>
</dbReference>
<dbReference type="Pfam" id="PF00357">
    <property type="entry name" value="Integrin_alpha"/>
    <property type="match status" value="1"/>
</dbReference>
<dbReference type="PRINTS" id="PR01185">
    <property type="entry name" value="INTEGRINA"/>
</dbReference>
<dbReference type="SMART" id="SM00191">
    <property type="entry name" value="Int_alpha"/>
    <property type="match status" value="5"/>
</dbReference>
<dbReference type="SUPFAM" id="SSF69318">
    <property type="entry name" value="Integrin alpha N-terminal domain"/>
    <property type="match status" value="1"/>
</dbReference>
<dbReference type="SUPFAM" id="SSF69179">
    <property type="entry name" value="Integrin domains"/>
    <property type="match status" value="3"/>
</dbReference>
<dbReference type="PROSITE" id="PS51470">
    <property type="entry name" value="FG_GAP"/>
    <property type="match status" value="7"/>
</dbReference>
<dbReference type="PROSITE" id="PS00242">
    <property type="entry name" value="INTEGRIN_ALPHA"/>
    <property type="match status" value="1"/>
</dbReference>
<accession>Q9QUM0</accession>
<accession>Q3U3R7</accession>
<accession>Q64229</accession>
<accession>Q9Z2M0</accession>
<sequence>MARASCAWHSLWLLQWTPLFLGPSAVPPVWALNLDSEKFSVYAGPNGSHFGFSVDFHKDKHGSVSIVVGAPRALNASQEETGAVFLCPWKANGGKCNPLLFDLRDETRNLGFQIFQTFKTGQGLGASVVSWNDVIVACAPWQHWNVLEKRDEAEKTPVGGCFLAQLQSGGRAEYSPCRANTMSSVYAESFRGDKRYCEAGFSLAVTQAGELVLGAPGGYFFLGLLARVPIENIISSYRPGTLLWHVSNQRFTYDNSNPVFFDGYRGYSVAVGEFDGDPSTTEYVSGAPTWSWTLGAVEILDSYYQPLHRLHGEQMASYFGHSVAVTDVNGDGRHDLLVGAPLYMESRADRKLAEVGRVYLFLQPKGPQALSTPTLLLTGTQLYGRFGSAIAPLGDLNRDGYNDIAVAAPYGGPSGQGQVLIFLGQSEGLSPRPSQVLDSPFPTGSGFGFSLRGAVDIDDNGYPDLIVGAYGASKVAVYRAQPVVMATVQLMVQDSLNPTLKNCVLDQTKTPVSCFNIQMCVGATGHNIPQKLHLKAELQLDLQKPRQGRRVLLLASQQASLTLSLDLGGRDKPICHTTGAFLRDEADFRDKLSPIVLSLNVSLPPEETGGAPAVVLHGETHVQEQTRIILDCGEDDLCVPQLRLTATAGDSPLLIGADNVLELKIEAANDGEGAYEAELAVHLPPGAHYMRALSNIEGFERLVCTQKKENESRVALCELGNPMKKDTRIGITMLVSVENLEEAGESVSFQLQVRSKNSQNPNSKVVMLPVAIQAEATVELRGNSFPASLVVAAEEGDREQEDLDRWVSRLEHTYELHNIGPGTVNGLRLLIHIPGQSQPSDLLYILDVQPQGGLLCSTQPSPKVDWKLSTPSPSSIRPVHHQRERRQAFLQGPKPGQQDPVLVSCDGSASCTVVECELREMVRGQRAMVTVQVMLGLSSLRQRPQEQFVLQSHAWFNVSSLPYSVPVVSLPSGQARVQTQLLRALEERAIPVWWVLVGVLGGLLLLTLLVLAMWKAGFFKRNRPPLEEDEEEE</sequence>
<evidence type="ECO:0000250" key="1"/>
<evidence type="ECO:0000250" key="2">
    <source>
        <dbReference type="UniProtKB" id="P08514"/>
    </source>
</evidence>
<evidence type="ECO:0000255" key="3"/>
<evidence type="ECO:0000255" key="4">
    <source>
        <dbReference type="PROSITE-ProRule" id="PRU00803"/>
    </source>
</evidence>
<evidence type="ECO:0000269" key="5">
    <source>
    </source>
</evidence>
<evidence type="ECO:0000305" key="6"/>
<gene>
    <name type="primary">Itga2b</name>
</gene>
<organism>
    <name type="scientific">Mus musculus</name>
    <name type="common">Mouse</name>
    <dbReference type="NCBI Taxonomy" id="10090"/>
    <lineage>
        <taxon>Eukaryota</taxon>
        <taxon>Metazoa</taxon>
        <taxon>Chordata</taxon>
        <taxon>Craniata</taxon>
        <taxon>Vertebrata</taxon>
        <taxon>Euteleostomi</taxon>
        <taxon>Mammalia</taxon>
        <taxon>Eutheria</taxon>
        <taxon>Euarchontoglires</taxon>
        <taxon>Glires</taxon>
        <taxon>Rodentia</taxon>
        <taxon>Myomorpha</taxon>
        <taxon>Muroidea</taxon>
        <taxon>Muridae</taxon>
        <taxon>Murinae</taxon>
        <taxon>Mus</taxon>
        <taxon>Mus</taxon>
    </lineage>
</organism>
<proteinExistence type="evidence at protein level"/>
<protein>
    <recommendedName>
        <fullName>Integrin alpha-IIb</fullName>
    </recommendedName>
    <alternativeName>
        <fullName>GPalpha IIb</fullName>
        <shortName>GPIIb</shortName>
    </alternativeName>
    <alternativeName>
        <fullName>Platelet membrane glycoprotein IIb</fullName>
    </alternativeName>
    <cdAntigenName>CD41</cdAntigenName>
    <component>
        <recommendedName>
            <fullName>Integrin alpha-IIb heavy chain</fullName>
        </recommendedName>
    </component>
    <component>
        <recommendedName>
            <fullName>Integrin alpha-IIb light chain</fullName>
        </recommendedName>
    </component>
</protein>
<feature type="signal peptide" evidence="1">
    <location>
        <begin position="1"/>
        <end position="31"/>
    </location>
</feature>
<feature type="chain" id="PRO_0000016278" description="Integrin alpha-IIb">
    <location>
        <begin position="32"/>
        <end position="1033"/>
    </location>
</feature>
<feature type="chain" id="PRO_0000016279" description="Integrin alpha-IIb heavy chain" evidence="1">
    <location>
        <begin position="32"/>
        <end status="unknown"/>
    </location>
</feature>
<feature type="chain" id="PRO_0000016280" description="Integrin alpha-IIb light chain" evidence="1">
    <location>
        <begin status="unknown"/>
        <end position="1033"/>
    </location>
</feature>
<feature type="topological domain" description="Extracellular" evidence="3">
    <location>
        <begin position="32"/>
        <end position="988"/>
    </location>
</feature>
<feature type="transmembrane region" description="Helical" evidence="3">
    <location>
        <begin position="989"/>
        <end position="1014"/>
    </location>
</feature>
<feature type="topological domain" description="Cytoplasmic" evidence="3">
    <location>
        <begin position="1015"/>
        <end position="1033"/>
    </location>
</feature>
<feature type="repeat" description="FG-GAP 1" evidence="4">
    <location>
        <begin position="35"/>
        <end position="96"/>
    </location>
</feature>
<feature type="repeat" description="FG-GAP 2" evidence="4">
    <location>
        <begin position="109"/>
        <end position="173"/>
    </location>
</feature>
<feature type="repeat" description="FG-GAP 3" evidence="4">
    <location>
        <begin position="184"/>
        <end position="237"/>
    </location>
</feature>
<feature type="repeat" description="FG-GAP 4" evidence="4">
    <location>
        <begin position="252"/>
        <end position="304"/>
    </location>
</feature>
<feature type="repeat" description="FG-GAP 5" evidence="4">
    <location>
        <begin position="305"/>
        <end position="370"/>
    </location>
</feature>
<feature type="repeat" description="FG-GAP 6" evidence="4">
    <location>
        <begin position="372"/>
        <end position="431"/>
    </location>
</feature>
<feature type="repeat" description="FG-GAP 7" evidence="4">
    <location>
        <begin position="434"/>
        <end position="495"/>
    </location>
</feature>
<feature type="short sequence motif" description="GFFKR motif">
    <location>
        <begin position="1017"/>
        <end position="1021"/>
    </location>
</feature>
<feature type="binding site" evidence="2">
    <location>
        <position position="273"/>
    </location>
    <ligand>
        <name>Ca(2+)</name>
        <dbReference type="ChEBI" id="CHEBI:29108"/>
        <label>1</label>
    </ligand>
</feature>
<feature type="binding site" evidence="2">
    <location>
        <position position="275"/>
    </location>
    <ligand>
        <name>Ca(2+)</name>
        <dbReference type="ChEBI" id="CHEBI:29108"/>
        <label>1</label>
    </ligand>
</feature>
<feature type="binding site" evidence="2">
    <location>
        <position position="277"/>
    </location>
    <ligand>
        <name>Ca(2+)</name>
        <dbReference type="ChEBI" id="CHEBI:29108"/>
        <label>1</label>
    </ligand>
</feature>
<feature type="binding site" evidence="2">
    <location>
        <position position="280"/>
    </location>
    <ligand>
        <name>Ca(2+)</name>
        <dbReference type="ChEBI" id="CHEBI:29108"/>
        <label>1</label>
    </ligand>
</feature>
<feature type="binding site" evidence="2">
    <location>
        <position position="282"/>
    </location>
    <ligand>
        <name>Ca(2+)</name>
        <dbReference type="ChEBI" id="CHEBI:29108"/>
        <label>1</label>
    </ligand>
</feature>
<feature type="binding site" evidence="2">
    <location>
        <position position="327"/>
    </location>
    <ligand>
        <name>Ca(2+)</name>
        <dbReference type="ChEBI" id="CHEBI:29108"/>
        <label>2</label>
    </ligand>
</feature>
<feature type="binding site" evidence="2">
    <location>
        <position position="329"/>
    </location>
    <ligand>
        <name>Ca(2+)</name>
        <dbReference type="ChEBI" id="CHEBI:29108"/>
        <label>2</label>
    </ligand>
</feature>
<feature type="binding site" evidence="2">
    <location>
        <position position="331"/>
    </location>
    <ligand>
        <name>Ca(2+)</name>
        <dbReference type="ChEBI" id="CHEBI:29108"/>
        <label>2</label>
    </ligand>
</feature>
<feature type="binding site" evidence="2">
    <location>
        <position position="333"/>
    </location>
    <ligand>
        <name>Ca(2+)</name>
        <dbReference type="ChEBI" id="CHEBI:29108"/>
        <label>2</label>
    </ligand>
</feature>
<feature type="binding site" evidence="2">
    <location>
        <position position="335"/>
    </location>
    <ligand>
        <name>Ca(2+)</name>
        <dbReference type="ChEBI" id="CHEBI:29108"/>
        <label>2</label>
    </ligand>
</feature>
<feature type="binding site" evidence="2">
    <location>
        <position position="395"/>
    </location>
    <ligand>
        <name>Ca(2+)</name>
        <dbReference type="ChEBI" id="CHEBI:29108"/>
        <label>3</label>
    </ligand>
</feature>
<feature type="binding site" evidence="2">
    <location>
        <position position="399"/>
    </location>
    <ligand>
        <name>Ca(2+)</name>
        <dbReference type="ChEBI" id="CHEBI:29108"/>
        <label>3</label>
    </ligand>
</feature>
<feature type="binding site" evidence="2">
    <location>
        <position position="401"/>
    </location>
    <ligand>
        <name>Ca(2+)</name>
        <dbReference type="ChEBI" id="CHEBI:29108"/>
        <label>3</label>
    </ligand>
</feature>
<feature type="binding site" evidence="2">
    <location>
        <position position="403"/>
    </location>
    <ligand>
        <name>Ca(2+)</name>
        <dbReference type="ChEBI" id="CHEBI:29108"/>
        <label>3</label>
    </ligand>
</feature>
<feature type="binding site" evidence="2">
    <location>
        <position position="456"/>
    </location>
    <ligand>
        <name>Ca(2+)</name>
        <dbReference type="ChEBI" id="CHEBI:29108"/>
        <label>4</label>
    </ligand>
</feature>
<feature type="binding site" evidence="2">
    <location>
        <position position="458"/>
    </location>
    <ligand>
        <name>Ca(2+)</name>
        <dbReference type="ChEBI" id="CHEBI:29108"/>
        <label>4</label>
    </ligand>
</feature>
<feature type="binding site" evidence="2">
    <location>
        <position position="460"/>
    </location>
    <ligand>
        <name>Ca(2+)</name>
        <dbReference type="ChEBI" id="CHEBI:29108"/>
        <label>4</label>
    </ligand>
</feature>
<feature type="binding site" evidence="2">
    <location>
        <position position="462"/>
    </location>
    <ligand>
        <name>Ca(2+)</name>
        <dbReference type="ChEBI" id="CHEBI:29108"/>
        <label>4</label>
    </ligand>
</feature>
<feature type="binding site" evidence="2">
    <location>
        <position position="464"/>
    </location>
    <ligand>
        <name>Ca(2+)</name>
        <dbReference type="ChEBI" id="CHEBI:29108"/>
        <label>4</label>
    </ligand>
</feature>
<feature type="glycosylation site" description="N-linked (GlcNAc...) asparagine" evidence="3">
    <location>
        <position position="46"/>
    </location>
</feature>
<feature type="glycosylation site" description="N-linked (GlcNAc...) asparagine" evidence="3">
    <location>
        <position position="75"/>
    </location>
</feature>
<feature type="glycosylation site" description="N-linked (GlcNAc...) asparagine" evidence="3">
    <location>
        <position position="600"/>
    </location>
</feature>
<feature type="glycosylation site" description="N-linked (GlcNAc...) asparagine" evidence="3">
    <location>
        <position position="710"/>
    </location>
</feature>
<feature type="glycosylation site" description="N-linked (GlcNAc...) asparagine" evidence="3">
    <location>
        <position position="957"/>
    </location>
</feature>
<feature type="disulfide bond" evidence="2">
    <location>
        <begin position="87"/>
        <end position="96"/>
    </location>
</feature>
<feature type="disulfide bond" evidence="2">
    <location>
        <begin position="138"/>
        <end position="161"/>
    </location>
</feature>
<feature type="disulfide bond" evidence="2">
    <location>
        <begin position="177"/>
        <end position="197"/>
    </location>
</feature>
<feature type="disulfide bond" evidence="2">
    <location>
        <begin position="503"/>
        <end position="514"/>
    </location>
</feature>
<feature type="disulfide bond" evidence="2">
    <location>
        <begin position="520"/>
        <end position="575"/>
    </location>
</feature>
<feature type="disulfide bond" evidence="2">
    <location>
        <begin position="632"/>
        <end position="638"/>
    </location>
</feature>
<feature type="disulfide bond" evidence="2">
    <location>
        <begin position="704"/>
        <end position="717"/>
    </location>
</feature>
<feature type="disulfide bond" description="Interchain (between heavy and light chains)" evidence="2">
    <location>
        <begin position="856"/>
        <end position="916"/>
    </location>
</feature>
<feature type="disulfide bond" evidence="2">
    <location>
        <begin position="905"/>
        <end position="911"/>
    </location>
</feature>
<feature type="sequence conflict" description="In Ref. 1; AAF06996/AAD56216." evidence="6" ref="1">
    <original>S</original>
    <variation>T</variation>
    <location>
        <position position="236"/>
    </location>
</feature>
<feature type="sequence conflict" description="In Ref. 1; AAF06996/AAD56216." evidence="6" ref="1">
    <original>A</original>
    <variation>S</variation>
    <location>
        <position position="270"/>
    </location>
</feature>
<feature type="sequence conflict" description="In Ref. 7; AAF43997." evidence="6" ref="7">
    <original>D</original>
    <variation>G</variation>
    <location>
        <position position="464"/>
    </location>
</feature>
<feature type="sequence conflict" description="In Ref. 1; AAF06996/AAD56216." evidence="6" ref="1">
    <original>G</original>
    <variation>W</variation>
    <location>
        <position position="471"/>
    </location>
</feature>
<feature type="sequence conflict" description="In Ref. 1; AAF06996/AAD56216." evidence="6" ref="1">
    <original>V</original>
    <variation>G</variation>
    <location>
        <position position="483"/>
    </location>
</feature>
<feature type="sequence conflict" description="In Ref. 1; AAF06996/AAD56216." evidence="6" ref="1">
    <original>R</original>
    <variation>S</variation>
    <location>
        <position position="805"/>
    </location>
</feature>
<feature type="sequence conflict" description="In Ref. 6; AAD02339." evidence="6" ref="6">
    <original>P</original>
    <variation>H</variation>
    <location>
        <position position="834"/>
    </location>
</feature>
<feature type="sequence conflict" description="In Ref. 6; AAD02339." evidence="6" ref="6">
    <original>VQ</original>
    <variation>LR</variation>
    <location>
        <begin position="848"/>
        <end position="849"/>
    </location>
</feature>
<feature type="sequence conflict" description="In Ref. 5; AAB23054." evidence="6" ref="5">
    <original>D</original>
    <variation>E</variation>
    <location>
        <position position="865"/>
    </location>
</feature>
<feature type="sequence conflict" description="In Ref. 1; AAF06996/AAD56216." evidence="6" ref="1">
    <original>V</original>
    <variation>A</variation>
    <location>
        <position position="933"/>
    </location>
</feature>
<keyword id="KW-0106">Calcium</keyword>
<keyword id="KW-0130">Cell adhesion</keyword>
<keyword id="KW-1015">Disulfide bond</keyword>
<keyword id="KW-0325">Glycoprotein</keyword>
<keyword id="KW-0401">Integrin</keyword>
<keyword id="KW-0472">Membrane</keyword>
<keyword id="KW-0479">Metal-binding</keyword>
<keyword id="KW-0675">Receptor</keyword>
<keyword id="KW-1185">Reference proteome</keyword>
<keyword id="KW-0677">Repeat</keyword>
<keyword id="KW-0732">Signal</keyword>
<keyword id="KW-0812">Transmembrane</keyword>
<keyword id="KW-1133">Transmembrane helix</keyword>